<name>CCA_ACTP2</name>
<proteinExistence type="inferred from homology"/>
<dbReference type="EC" id="2.7.7.72" evidence="1"/>
<dbReference type="EC" id="3.1.3.-" evidence="1"/>
<dbReference type="EC" id="3.1.4.-" evidence="1"/>
<dbReference type="EMBL" id="CP000569">
    <property type="protein sequence ID" value="ABN74011.1"/>
    <property type="molecule type" value="Genomic_DNA"/>
</dbReference>
<dbReference type="RefSeq" id="WP_005597568.1">
    <property type="nucleotide sequence ID" value="NC_009053.1"/>
</dbReference>
<dbReference type="SMR" id="A3N0S5"/>
<dbReference type="STRING" id="416269.APL_0915"/>
<dbReference type="EnsemblBacteria" id="ABN74011">
    <property type="protein sequence ID" value="ABN74011"/>
    <property type="gene ID" value="APL_0915"/>
</dbReference>
<dbReference type="KEGG" id="apl:APL_0915"/>
<dbReference type="eggNOG" id="COG0617">
    <property type="taxonomic scope" value="Bacteria"/>
</dbReference>
<dbReference type="HOGENOM" id="CLU_015961_1_1_6"/>
<dbReference type="Proteomes" id="UP000001432">
    <property type="component" value="Chromosome"/>
</dbReference>
<dbReference type="GO" id="GO:0005524">
    <property type="term" value="F:ATP binding"/>
    <property type="evidence" value="ECO:0007669"/>
    <property type="project" value="UniProtKB-UniRule"/>
</dbReference>
<dbReference type="GO" id="GO:0004810">
    <property type="term" value="F:CCA tRNA nucleotidyltransferase activity"/>
    <property type="evidence" value="ECO:0007669"/>
    <property type="project" value="UniProtKB-UniRule"/>
</dbReference>
<dbReference type="GO" id="GO:0004112">
    <property type="term" value="F:cyclic-nucleotide phosphodiesterase activity"/>
    <property type="evidence" value="ECO:0007669"/>
    <property type="project" value="UniProtKB-UniRule"/>
</dbReference>
<dbReference type="GO" id="GO:0000287">
    <property type="term" value="F:magnesium ion binding"/>
    <property type="evidence" value="ECO:0007669"/>
    <property type="project" value="UniProtKB-UniRule"/>
</dbReference>
<dbReference type="GO" id="GO:0016791">
    <property type="term" value="F:phosphatase activity"/>
    <property type="evidence" value="ECO:0007669"/>
    <property type="project" value="UniProtKB-UniRule"/>
</dbReference>
<dbReference type="GO" id="GO:0000049">
    <property type="term" value="F:tRNA binding"/>
    <property type="evidence" value="ECO:0007669"/>
    <property type="project" value="UniProtKB-UniRule"/>
</dbReference>
<dbReference type="GO" id="GO:0042245">
    <property type="term" value="P:RNA repair"/>
    <property type="evidence" value="ECO:0007669"/>
    <property type="project" value="UniProtKB-KW"/>
</dbReference>
<dbReference type="GO" id="GO:0001680">
    <property type="term" value="P:tRNA 3'-terminal CCA addition"/>
    <property type="evidence" value="ECO:0007669"/>
    <property type="project" value="UniProtKB-UniRule"/>
</dbReference>
<dbReference type="CDD" id="cd00077">
    <property type="entry name" value="HDc"/>
    <property type="match status" value="1"/>
</dbReference>
<dbReference type="CDD" id="cd05398">
    <property type="entry name" value="NT_ClassII-CCAase"/>
    <property type="match status" value="1"/>
</dbReference>
<dbReference type="Gene3D" id="3.30.460.10">
    <property type="entry name" value="Beta Polymerase, domain 2"/>
    <property type="match status" value="1"/>
</dbReference>
<dbReference type="Gene3D" id="1.10.3090.10">
    <property type="entry name" value="cca-adding enzyme, domain 2"/>
    <property type="match status" value="1"/>
</dbReference>
<dbReference type="HAMAP" id="MF_01261">
    <property type="entry name" value="CCA_bact_type1"/>
    <property type="match status" value="1"/>
</dbReference>
<dbReference type="HAMAP" id="MF_01262">
    <property type="entry name" value="CCA_bact_type2"/>
    <property type="match status" value="1"/>
</dbReference>
<dbReference type="InterPro" id="IPR012006">
    <property type="entry name" value="CCA_bact"/>
</dbReference>
<dbReference type="InterPro" id="IPR003607">
    <property type="entry name" value="HD/PDEase_dom"/>
</dbReference>
<dbReference type="InterPro" id="IPR006674">
    <property type="entry name" value="HD_domain"/>
</dbReference>
<dbReference type="InterPro" id="IPR006675">
    <property type="entry name" value="HDIG_dom"/>
</dbReference>
<dbReference type="InterPro" id="IPR043519">
    <property type="entry name" value="NT_sf"/>
</dbReference>
<dbReference type="InterPro" id="IPR002646">
    <property type="entry name" value="PolA_pol_head_dom"/>
</dbReference>
<dbReference type="InterPro" id="IPR032828">
    <property type="entry name" value="PolyA_RNA-bd"/>
</dbReference>
<dbReference type="InterPro" id="IPR050124">
    <property type="entry name" value="tRNA_CCA-adding_enzyme"/>
</dbReference>
<dbReference type="NCBIfam" id="TIGR00277">
    <property type="entry name" value="HDIG"/>
    <property type="match status" value="1"/>
</dbReference>
<dbReference type="NCBIfam" id="NF008137">
    <property type="entry name" value="PRK10885.1"/>
    <property type="match status" value="1"/>
</dbReference>
<dbReference type="PANTHER" id="PTHR47545">
    <property type="entry name" value="MULTIFUNCTIONAL CCA PROTEIN"/>
    <property type="match status" value="1"/>
</dbReference>
<dbReference type="PANTHER" id="PTHR47545:SF1">
    <property type="entry name" value="MULTIFUNCTIONAL CCA PROTEIN"/>
    <property type="match status" value="1"/>
</dbReference>
<dbReference type="Pfam" id="PF01966">
    <property type="entry name" value="HD"/>
    <property type="match status" value="1"/>
</dbReference>
<dbReference type="Pfam" id="PF01743">
    <property type="entry name" value="PolyA_pol"/>
    <property type="match status" value="1"/>
</dbReference>
<dbReference type="Pfam" id="PF12627">
    <property type="entry name" value="PolyA_pol_RNAbd"/>
    <property type="match status" value="1"/>
</dbReference>
<dbReference type="PIRSF" id="PIRSF000813">
    <property type="entry name" value="CCA_bact"/>
    <property type="match status" value="1"/>
</dbReference>
<dbReference type="SUPFAM" id="SSF81301">
    <property type="entry name" value="Nucleotidyltransferase"/>
    <property type="match status" value="1"/>
</dbReference>
<dbReference type="SUPFAM" id="SSF81891">
    <property type="entry name" value="Poly A polymerase C-terminal region-like"/>
    <property type="match status" value="1"/>
</dbReference>
<dbReference type="PROSITE" id="PS51831">
    <property type="entry name" value="HD"/>
    <property type="match status" value="1"/>
</dbReference>
<sequence length="411" mass="46680">MQIYLVGGAVRDQLLNLPVKDRDYLVVGATPEQLLAQGYQQVGNDFPVFLHPKTKEEYALARQERKNGVGYNGFLCDFSPDVTLEQDLIRRDLTINAIAQDASGQIFDPYGGKQDLANRLLRHISPAFSEDPLRVLRVARFAARFHSLGFKIAPETVKLMQEMTACGELAHLTAERVWLETQKAFATDNPQIYFEVLREIGALAVLFPEFDRLFGVPQPEQHHPEIDSGVHTLLVIEQAKRLAKNAENPTALLWAALCHDLGKGLTEKDILPHHYGHEVKGVKPARELSNRLKVSTDVKDFAILVTEYHTHCHKMAELRPETVLKVFNALDIWRKPQRFCDFLLACEADARGRLGFENREYPQAELAKWYFKVAAQVDVQAVIQDGFEKKAIREELNKRRITAIKIIKPNV</sequence>
<feature type="chain" id="PRO_1000054243" description="Multifunctional CCA protein">
    <location>
        <begin position="1"/>
        <end position="411"/>
    </location>
</feature>
<feature type="domain" description="HD" evidence="1">
    <location>
        <begin position="228"/>
        <end position="333"/>
    </location>
</feature>
<feature type="binding site" evidence="1">
    <location>
        <position position="8"/>
    </location>
    <ligand>
        <name>ATP</name>
        <dbReference type="ChEBI" id="CHEBI:30616"/>
    </ligand>
</feature>
<feature type="binding site" evidence="1">
    <location>
        <position position="8"/>
    </location>
    <ligand>
        <name>CTP</name>
        <dbReference type="ChEBI" id="CHEBI:37563"/>
    </ligand>
</feature>
<feature type="binding site" evidence="1">
    <location>
        <position position="11"/>
    </location>
    <ligand>
        <name>ATP</name>
        <dbReference type="ChEBI" id="CHEBI:30616"/>
    </ligand>
</feature>
<feature type="binding site" evidence="1">
    <location>
        <position position="11"/>
    </location>
    <ligand>
        <name>CTP</name>
        <dbReference type="ChEBI" id="CHEBI:37563"/>
    </ligand>
</feature>
<feature type="binding site" evidence="1">
    <location>
        <position position="21"/>
    </location>
    <ligand>
        <name>Mg(2+)</name>
        <dbReference type="ChEBI" id="CHEBI:18420"/>
    </ligand>
</feature>
<feature type="binding site" evidence="1">
    <location>
        <position position="23"/>
    </location>
    <ligand>
        <name>Mg(2+)</name>
        <dbReference type="ChEBI" id="CHEBI:18420"/>
    </ligand>
</feature>
<feature type="binding site" evidence="1">
    <location>
        <position position="91"/>
    </location>
    <ligand>
        <name>ATP</name>
        <dbReference type="ChEBI" id="CHEBI:30616"/>
    </ligand>
</feature>
<feature type="binding site" evidence="1">
    <location>
        <position position="91"/>
    </location>
    <ligand>
        <name>CTP</name>
        <dbReference type="ChEBI" id="CHEBI:37563"/>
    </ligand>
</feature>
<feature type="binding site" evidence="1">
    <location>
        <position position="137"/>
    </location>
    <ligand>
        <name>ATP</name>
        <dbReference type="ChEBI" id="CHEBI:30616"/>
    </ligand>
</feature>
<feature type="binding site" evidence="1">
    <location>
        <position position="137"/>
    </location>
    <ligand>
        <name>CTP</name>
        <dbReference type="ChEBI" id="CHEBI:37563"/>
    </ligand>
</feature>
<feature type="binding site" evidence="1">
    <location>
        <position position="140"/>
    </location>
    <ligand>
        <name>ATP</name>
        <dbReference type="ChEBI" id="CHEBI:30616"/>
    </ligand>
</feature>
<feature type="binding site" evidence="1">
    <location>
        <position position="140"/>
    </location>
    <ligand>
        <name>CTP</name>
        <dbReference type="ChEBI" id="CHEBI:37563"/>
    </ligand>
</feature>
<evidence type="ECO:0000255" key="1">
    <source>
        <dbReference type="HAMAP-Rule" id="MF_01261"/>
    </source>
</evidence>
<protein>
    <recommendedName>
        <fullName evidence="1">Multifunctional CCA protein</fullName>
    </recommendedName>
    <domain>
        <recommendedName>
            <fullName evidence="1">CCA-adding enzyme</fullName>
            <ecNumber evidence="1">2.7.7.72</ecNumber>
        </recommendedName>
        <alternativeName>
            <fullName evidence="1">CCA tRNA nucleotidyltransferase</fullName>
        </alternativeName>
        <alternativeName>
            <fullName evidence="1">tRNA CCA-pyrophosphorylase</fullName>
        </alternativeName>
        <alternativeName>
            <fullName evidence="1">tRNA adenylyl-/cytidylyl-transferase</fullName>
        </alternativeName>
        <alternativeName>
            <fullName evidence="1">tRNA nucleotidyltransferase</fullName>
        </alternativeName>
        <alternativeName>
            <fullName evidence="1">tRNA-NT</fullName>
        </alternativeName>
    </domain>
    <domain>
        <recommendedName>
            <fullName evidence="1">2'-nucleotidase</fullName>
            <ecNumber evidence="1">3.1.3.-</ecNumber>
        </recommendedName>
    </domain>
    <domain>
        <recommendedName>
            <fullName evidence="1">2',3'-cyclic phosphodiesterase</fullName>
            <ecNumber evidence="1">3.1.4.-</ecNumber>
        </recommendedName>
    </domain>
    <domain>
        <recommendedName>
            <fullName evidence="1">Phosphatase</fullName>
            <ecNumber evidence="1">3.1.3.-</ecNumber>
        </recommendedName>
    </domain>
</protein>
<comment type="function">
    <text evidence="1">Catalyzes the addition and repair of the essential 3'-terminal CCA sequence in tRNAs without using a nucleic acid template. Adds these three nucleotides in the order of C, C, and A to the tRNA nucleotide-73, using CTP and ATP as substrates and producing inorganic pyrophosphate. tRNA 3'-terminal CCA addition is required both for tRNA processing and repair. Also involved in tRNA surveillance by mediating tandem CCA addition to generate a CCACCA at the 3' terminus of unstable tRNAs. While stable tRNAs receive only 3'-terminal CCA, unstable tRNAs are marked with CCACCA and rapidly degraded.</text>
</comment>
<comment type="catalytic activity">
    <reaction evidence="1">
        <text>a tRNA precursor + 2 CTP + ATP = a tRNA with a 3' CCA end + 3 diphosphate</text>
        <dbReference type="Rhea" id="RHEA:14433"/>
        <dbReference type="Rhea" id="RHEA-COMP:10465"/>
        <dbReference type="Rhea" id="RHEA-COMP:10468"/>
        <dbReference type="ChEBI" id="CHEBI:30616"/>
        <dbReference type="ChEBI" id="CHEBI:33019"/>
        <dbReference type="ChEBI" id="CHEBI:37563"/>
        <dbReference type="ChEBI" id="CHEBI:74896"/>
        <dbReference type="ChEBI" id="CHEBI:83071"/>
        <dbReference type="EC" id="2.7.7.72"/>
    </reaction>
</comment>
<comment type="catalytic activity">
    <reaction evidence="1">
        <text>a tRNA with a 3' CCA end + 2 CTP + ATP = a tRNA with a 3' CCACCA end + 3 diphosphate</text>
        <dbReference type="Rhea" id="RHEA:76235"/>
        <dbReference type="Rhea" id="RHEA-COMP:10468"/>
        <dbReference type="Rhea" id="RHEA-COMP:18655"/>
        <dbReference type="ChEBI" id="CHEBI:30616"/>
        <dbReference type="ChEBI" id="CHEBI:33019"/>
        <dbReference type="ChEBI" id="CHEBI:37563"/>
        <dbReference type="ChEBI" id="CHEBI:83071"/>
        <dbReference type="ChEBI" id="CHEBI:195187"/>
    </reaction>
    <physiologicalReaction direction="left-to-right" evidence="1">
        <dbReference type="Rhea" id="RHEA:76236"/>
    </physiologicalReaction>
</comment>
<comment type="cofactor">
    <cofactor evidence="1">
        <name>Mg(2+)</name>
        <dbReference type="ChEBI" id="CHEBI:18420"/>
    </cofactor>
    <text evidence="1">Magnesium is required for nucleotidyltransferase activity.</text>
</comment>
<comment type="cofactor">
    <cofactor evidence="1">
        <name>Ni(2+)</name>
        <dbReference type="ChEBI" id="CHEBI:49786"/>
    </cofactor>
    <text evidence="1">Nickel for phosphatase activity.</text>
</comment>
<comment type="subunit">
    <text evidence="1">Monomer. Can also form homodimers and oligomers.</text>
</comment>
<comment type="domain">
    <text evidence="1">Comprises two domains: an N-terminal domain containing the nucleotidyltransferase activity and a C-terminal HD domain associated with both phosphodiesterase and phosphatase activities.</text>
</comment>
<comment type="miscellaneous">
    <text evidence="1">A single active site specifically recognizes both ATP and CTP and is responsible for their addition.</text>
</comment>
<comment type="similarity">
    <text evidence="1">Belongs to the tRNA nucleotidyltransferase/poly(A) polymerase family. Bacterial CCA-adding enzyme type 1 subfamily.</text>
</comment>
<reference key="1">
    <citation type="journal article" date="2008" name="J. Bacteriol.">
        <title>The complete genome sequence of Actinobacillus pleuropneumoniae L20 (serotype 5b).</title>
        <authorList>
            <person name="Foote S.J."/>
            <person name="Bosse J.T."/>
            <person name="Bouevitch A.B."/>
            <person name="Langford P.R."/>
            <person name="Young N.M."/>
            <person name="Nash J.H.E."/>
        </authorList>
    </citation>
    <scope>NUCLEOTIDE SEQUENCE [LARGE SCALE GENOMIC DNA]</scope>
    <source>
        <strain>L20</strain>
    </source>
</reference>
<accession>A3N0S5</accession>
<keyword id="KW-0067">ATP-binding</keyword>
<keyword id="KW-0378">Hydrolase</keyword>
<keyword id="KW-0460">Magnesium</keyword>
<keyword id="KW-0479">Metal-binding</keyword>
<keyword id="KW-0511">Multifunctional enzyme</keyword>
<keyword id="KW-0533">Nickel</keyword>
<keyword id="KW-0547">Nucleotide-binding</keyword>
<keyword id="KW-0548">Nucleotidyltransferase</keyword>
<keyword id="KW-1185">Reference proteome</keyword>
<keyword id="KW-0692">RNA repair</keyword>
<keyword id="KW-0694">RNA-binding</keyword>
<keyword id="KW-0808">Transferase</keyword>
<keyword id="KW-0819">tRNA processing</keyword>
<organism>
    <name type="scientific">Actinobacillus pleuropneumoniae serotype 5b (strain L20)</name>
    <dbReference type="NCBI Taxonomy" id="416269"/>
    <lineage>
        <taxon>Bacteria</taxon>
        <taxon>Pseudomonadati</taxon>
        <taxon>Pseudomonadota</taxon>
        <taxon>Gammaproteobacteria</taxon>
        <taxon>Pasteurellales</taxon>
        <taxon>Pasteurellaceae</taxon>
        <taxon>Actinobacillus</taxon>
    </lineage>
</organism>
<gene>
    <name evidence="1" type="primary">cca</name>
    <name type="ordered locus">APL_0915</name>
</gene>